<dbReference type="EC" id="6.3.4.20" evidence="1"/>
<dbReference type="EMBL" id="BX572602">
    <property type="protein sequence ID" value="CAE28252.1"/>
    <property type="molecule type" value="Genomic_DNA"/>
</dbReference>
<dbReference type="RefSeq" id="WP_011158361.1">
    <property type="nucleotide sequence ID" value="NZ_CP116810.1"/>
</dbReference>
<dbReference type="SMR" id="Q6N608"/>
<dbReference type="STRING" id="258594.RPA2810"/>
<dbReference type="GeneID" id="66893887"/>
<dbReference type="eggNOG" id="COG0603">
    <property type="taxonomic scope" value="Bacteria"/>
</dbReference>
<dbReference type="HOGENOM" id="CLU_081854_0_0_5"/>
<dbReference type="PhylomeDB" id="Q6N608"/>
<dbReference type="UniPathway" id="UPA00391"/>
<dbReference type="GO" id="GO:0005524">
    <property type="term" value="F:ATP binding"/>
    <property type="evidence" value="ECO:0007669"/>
    <property type="project" value="UniProtKB-UniRule"/>
</dbReference>
<dbReference type="GO" id="GO:0016879">
    <property type="term" value="F:ligase activity, forming carbon-nitrogen bonds"/>
    <property type="evidence" value="ECO:0007669"/>
    <property type="project" value="UniProtKB-UniRule"/>
</dbReference>
<dbReference type="GO" id="GO:0008270">
    <property type="term" value="F:zinc ion binding"/>
    <property type="evidence" value="ECO:0007669"/>
    <property type="project" value="UniProtKB-UniRule"/>
</dbReference>
<dbReference type="GO" id="GO:0008616">
    <property type="term" value="P:queuosine biosynthetic process"/>
    <property type="evidence" value="ECO:0007669"/>
    <property type="project" value="UniProtKB-UniRule"/>
</dbReference>
<dbReference type="CDD" id="cd01995">
    <property type="entry name" value="QueC-like"/>
    <property type="match status" value="1"/>
</dbReference>
<dbReference type="Gene3D" id="3.40.50.620">
    <property type="entry name" value="HUPs"/>
    <property type="match status" value="1"/>
</dbReference>
<dbReference type="HAMAP" id="MF_01633">
    <property type="entry name" value="QueC"/>
    <property type="match status" value="1"/>
</dbReference>
<dbReference type="InterPro" id="IPR018317">
    <property type="entry name" value="QueC"/>
</dbReference>
<dbReference type="InterPro" id="IPR014729">
    <property type="entry name" value="Rossmann-like_a/b/a_fold"/>
</dbReference>
<dbReference type="NCBIfam" id="TIGR00364">
    <property type="entry name" value="7-cyano-7-deazaguanine synthase QueC"/>
    <property type="match status" value="1"/>
</dbReference>
<dbReference type="PANTHER" id="PTHR42914">
    <property type="entry name" value="7-CYANO-7-DEAZAGUANINE SYNTHASE"/>
    <property type="match status" value="1"/>
</dbReference>
<dbReference type="PANTHER" id="PTHR42914:SF1">
    <property type="entry name" value="7-CYANO-7-DEAZAGUANINE SYNTHASE"/>
    <property type="match status" value="1"/>
</dbReference>
<dbReference type="Pfam" id="PF06508">
    <property type="entry name" value="QueC"/>
    <property type="match status" value="1"/>
</dbReference>
<dbReference type="PIRSF" id="PIRSF006293">
    <property type="entry name" value="ExsB"/>
    <property type="match status" value="1"/>
</dbReference>
<dbReference type="SUPFAM" id="SSF52402">
    <property type="entry name" value="Adenine nucleotide alpha hydrolases-like"/>
    <property type="match status" value="1"/>
</dbReference>
<keyword id="KW-0067">ATP-binding</keyword>
<keyword id="KW-0436">Ligase</keyword>
<keyword id="KW-0479">Metal-binding</keyword>
<keyword id="KW-0547">Nucleotide-binding</keyword>
<keyword id="KW-0671">Queuosine biosynthesis</keyword>
<keyword id="KW-0862">Zinc</keyword>
<organism>
    <name type="scientific">Rhodopseudomonas palustris (strain ATCC BAA-98 / CGA009)</name>
    <dbReference type="NCBI Taxonomy" id="258594"/>
    <lineage>
        <taxon>Bacteria</taxon>
        <taxon>Pseudomonadati</taxon>
        <taxon>Pseudomonadota</taxon>
        <taxon>Alphaproteobacteria</taxon>
        <taxon>Hyphomicrobiales</taxon>
        <taxon>Nitrobacteraceae</taxon>
        <taxon>Rhodopseudomonas</taxon>
    </lineage>
</organism>
<sequence>MTDHSSDKTALVLFSGGQDSATCLAWALARFARVETIGFDYGQRHLIELECRARLLDGFRAISDDWAAKLGDNHTLTIPTLAEISDTALTRDVAIAMGADGLPNTFVPGRNLIFLNFAAALAYRRGITDIVGGMCETDYSGYPDCRNDTIQALQTALSLGMARDITLHTPLMWRDKAATWQLAQDLGGDALVDLIREDSHTCYLGERGARHDWGYGCGECPACRLRAKGWIEYASGI</sequence>
<evidence type="ECO:0000255" key="1">
    <source>
        <dbReference type="HAMAP-Rule" id="MF_01633"/>
    </source>
</evidence>
<name>QUEC_RHOPA</name>
<comment type="function">
    <text evidence="1">Catalyzes the ATP-dependent conversion of 7-carboxy-7-deazaguanine (CDG) to 7-cyano-7-deazaguanine (preQ(0)).</text>
</comment>
<comment type="catalytic activity">
    <reaction evidence="1">
        <text>7-carboxy-7-deazaguanine + NH4(+) + ATP = 7-cyano-7-deazaguanine + ADP + phosphate + H2O + H(+)</text>
        <dbReference type="Rhea" id="RHEA:27982"/>
        <dbReference type="ChEBI" id="CHEBI:15377"/>
        <dbReference type="ChEBI" id="CHEBI:15378"/>
        <dbReference type="ChEBI" id="CHEBI:28938"/>
        <dbReference type="ChEBI" id="CHEBI:30616"/>
        <dbReference type="ChEBI" id="CHEBI:43474"/>
        <dbReference type="ChEBI" id="CHEBI:45075"/>
        <dbReference type="ChEBI" id="CHEBI:61036"/>
        <dbReference type="ChEBI" id="CHEBI:456216"/>
        <dbReference type="EC" id="6.3.4.20"/>
    </reaction>
</comment>
<comment type="cofactor">
    <cofactor evidence="1">
        <name>Zn(2+)</name>
        <dbReference type="ChEBI" id="CHEBI:29105"/>
    </cofactor>
    <text evidence="1">Binds 1 zinc ion per subunit.</text>
</comment>
<comment type="pathway">
    <text evidence="1">Purine metabolism; 7-cyano-7-deazaguanine biosynthesis.</text>
</comment>
<comment type="similarity">
    <text evidence="1">Belongs to the QueC family.</text>
</comment>
<gene>
    <name evidence="1" type="primary">queC</name>
    <name type="ordered locus">RPA2810</name>
</gene>
<proteinExistence type="inferred from homology"/>
<feature type="chain" id="PRO_0000246906" description="7-cyano-7-deazaguanine synthase">
    <location>
        <begin position="1"/>
        <end position="237"/>
    </location>
</feature>
<feature type="binding site" evidence="1">
    <location>
        <begin position="14"/>
        <end position="24"/>
    </location>
    <ligand>
        <name>ATP</name>
        <dbReference type="ChEBI" id="CHEBI:30616"/>
    </ligand>
</feature>
<feature type="binding site" evidence="1">
    <location>
        <position position="202"/>
    </location>
    <ligand>
        <name>Zn(2+)</name>
        <dbReference type="ChEBI" id="CHEBI:29105"/>
    </ligand>
</feature>
<feature type="binding site" evidence="1">
    <location>
        <position position="217"/>
    </location>
    <ligand>
        <name>Zn(2+)</name>
        <dbReference type="ChEBI" id="CHEBI:29105"/>
    </ligand>
</feature>
<feature type="binding site" evidence="1">
    <location>
        <position position="220"/>
    </location>
    <ligand>
        <name>Zn(2+)</name>
        <dbReference type="ChEBI" id="CHEBI:29105"/>
    </ligand>
</feature>
<feature type="binding site" evidence="1">
    <location>
        <position position="223"/>
    </location>
    <ligand>
        <name>Zn(2+)</name>
        <dbReference type="ChEBI" id="CHEBI:29105"/>
    </ligand>
</feature>
<protein>
    <recommendedName>
        <fullName evidence="1">7-cyano-7-deazaguanine synthase</fullName>
        <ecNumber evidence="1">6.3.4.20</ecNumber>
    </recommendedName>
    <alternativeName>
        <fullName evidence="1">7-cyano-7-carbaguanine synthase</fullName>
    </alternativeName>
    <alternativeName>
        <fullName evidence="1">PreQ(0) synthase</fullName>
    </alternativeName>
    <alternativeName>
        <fullName evidence="1">Queuosine biosynthesis protein QueC</fullName>
    </alternativeName>
</protein>
<reference key="1">
    <citation type="journal article" date="2004" name="Nat. Biotechnol.">
        <title>Complete genome sequence of the metabolically versatile photosynthetic bacterium Rhodopseudomonas palustris.</title>
        <authorList>
            <person name="Larimer F.W."/>
            <person name="Chain P."/>
            <person name="Hauser L."/>
            <person name="Lamerdin J.E."/>
            <person name="Malfatti S."/>
            <person name="Do L."/>
            <person name="Land M.L."/>
            <person name="Pelletier D.A."/>
            <person name="Beatty J.T."/>
            <person name="Lang A.S."/>
            <person name="Tabita F.R."/>
            <person name="Gibson J.L."/>
            <person name="Hanson T.E."/>
            <person name="Bobst C."/>
            <person name="Torres y Torres J.L."/>
            <person name="Peres C."/>
            <person name="Harrison F.H."/>
            <person name="Gibson J."/>
            <person name="Harwood C.S."/>
        </authorList>
    </citation>
    <scope>NUCLEOTIDE SEQUENCE [LARGE SCALE GENOMIC DNA]</scope>
    <source>
        <strain>ATCC BAA-98 / CGA009</strain>
    </source>
</reference>
<accession>Q6N608</accession>